<gene>
    <name evidence="1" type="primary">mutS</name>
    <name type="ordered locus">Bphyt_2520</name>
</gene>
<name>MUTS_PARPJ</name>
<protein>
    <recommendedName>
        <fullName evidence="1">DNA mismatch repair protein MutS</fullName>
    </recommendedName>
</protein>
<proteinExistence type="inferred from homology"/>
<keyword id="KW-0067">ATP-binding</keyword>
<keyword id="KW-0227">DNA damage</keyword>
<keyword id="KW-0234">DNA repair</keyword>
<keyword id="KW-0238">DNA-binding</keyword>
<keyword id="KW-0547">Nucleotide-binding</keyword>
<sequence length="894" mass="97007">MGIQTAAANDVAQHTPMMQQYLRIKADHPGTLVFYRMGDFYELFFEDAEKAARLLDLTLTQRGASAGNPIKMAGVPHHAVEQYLAKLVKLGESVAICEQIGDPATSKGPVERKVVRVVTPGTLTDAALLSDKSDVYLLAMCVAHNRRGVATSVGLAWLNLASGALRLAEVAPDQVAAALERIRPAEILVADTPSDSASWTPPVNAGALTRVPVWHFDVTSGTQRLCDQLEVAGLDGFGAHSLTCACGAAGALLLYAAATQGQQLRHVRSLKVEYESEYIGLDPATRRNLELTETLRGTESPTLCSLLDTCCTTMGSRLLRHWLHHPPRESAVAQARQQAIGALLDAPPGASIDSLRGALRQISDIERITGRLALLSARPRDLSSLRDTFIALPELRTQVAAVAPNADSLARIDASLEPPQACVELLKRAVAQEPSAMVRDGGVIARGYDAELDELRDISENCGQFLIDLETRERARTGIGNLRVEYNKVHGFYIEVTRGQTDKVPDDYRRRQTLKNAERYITPELKTFEDKALSAQERALARERSLYDALLQALLPFIPDCQRVASALAELDLLAAFGERARALDWVAPTFSANAGIEIEQGRHPVVEAQVEQFIANDCSLTPERKLLLITGPNMGGKSTFMRQTALIALLAYVGSYVPARRAAFGPIDRIFTRIGAADDLAGGRSTFMVEMTEAAAILNDATPQSLVLMDEIGRGTSTFDGLALAWAIARHLLAHNGCHTLFATHYFELTQLPAEFPQAANVHLSAVEHGHGIVFLHAVSEGPANQSYGLQVAQLAGVPNAVIRAARKHLAHLEQQSAAQPAPQLDLFATPMPMLLEDADDERDAKAEPAVPPAMQELVERLRGIDPNDLRPREALDLLYELHELAAAPDADH</sequence>
<accession>B2SXQ9</accession>
<comment type="function">
    <text evidence="1">This protein is involved in the repair of mismatches in DNA. It is possible that it carries out the mismatch recognition step. This protein has a weak ATPase activity.</text>
</comment>
<comment type="similarity">
    <text evidence="1">Belongs to the DNA mismatch repair MutS family.</text>
</comment>
<evidence type="ECO:0000255" key="1">
    <source>
        <dbReference type="HAMAP-Rule" id="MF_00096"/>
    </source>
</evidence>
<dbReference type="EMBL" id="CP001052">
    <property type="protein sequence ID" value="ACD16915.1"/>
    <property type="molecule type" value="Genomic_DNA"/>
</dbReference>
<dbReference type="RefSeq" id="WP_012433511.1">
    <property type="nucleotide sequence ID" value="NC_010681.1"/>
</dbReference>
<dbReference type="SMR" id="B2SXQ9"/>
<dbReference type="STRING" id="398527.Bphyt_2520"/>
<dbReference type="KEGG" id="bpy:Bphyt_2520"/>
<dbReference type="eggNOG" id="COG0249">
    <property type="taxonomic scope" value="Bacteria"/>
</dbReference>
<dbReference type="HOGENOM" id="CLU_002472_4_1_4"/>
<dbReference type="OrthoDB" id="9802448at2"/>
<dbReference type="Proteomes" id="UP000001739">
    <property type="component" value="Chromosome 1"/>
</dbReference>
<dbReference type="GO" id="GO:0005829">
    <property type="term" value="C:cytosol"/>
    <property type="evidence" value="ECO:0007669"/>
    <property type="project" value="TreeGrafter"/>
</dbReference>
<dbReference type="GO" id="GO:0005524">
    <property type="term" value="F:ATP binding"/>
    <property type="evidence" value="ECO:0007669"/>
    <property type="project" value="UniProtKB-UniRule"/>
</dbReference>
<dbReference type="GO" id="GO:0140664">
    <property type="term" value="F:ATP-dependent DNA damage sensor activity"/>
    <property type="evidence" value="ECO:0007669"/>
    <property type="project" value="InterPro"/>
</dbReference>
<dbReference type="GO" id="GO:0003684">
    <property type="term" value="F:damaged DNA binding"/>
    <property type="evidence" value="ECO:0007669"/>
    <property type="project" value="UniProtKB-UniRule"/>
</dbReference>
<dbReference type="GO" id="GO:0030983">
    <property type="term" value="F:mismatched DNA binding"/>
    <property type="evidence" value="ECO:0007669"/>
    <property type="project" value="InterPro"/>
</dbReference>
<dbReference type="GO" id="GO:0006298">
    <property type="term" value="P:mismatch repair"/>
    <property type="evidence" value="ECO:0007669"/>
    <property type="project" value="UniProtKB-UniRule"/>
</dbReference>
<dbReference type="CDD" id="cd03284">
    <property type="entry name" value="ABC_MutS1"/>
    <property type="match status" value="1"/>
</dbReference>
<dbReference type="FunFam" id="1.10.1420.10:FF:000001">
    <property type="entry name" value="DNA mismatch repair protein MutS"/>
    <property type="match status" value="1"/>
</dbReference>
<dbReference type="FunFam" id="3.40.1170.10:FF:000001">
    <property type="entry name" value="DNA mismatch repair protein MutS"/>
    <property type="match status" value="1"/>
</dbReference>
<dbReference type="FunFam" id="3.40.50.300:FF:000870">
    <property type="entry name" value="MutS protein homolog 4"/>
    <property type="match status" value="1"/>
</dbReference>
<dbReference type="Gene3D" id="1.10.1420.10">
    <property type="match status" value="2"/>
</dbReference>
<dbReference type="Gene3D" id="6.10.140.430">
    <property type="match status" value="1"/>
</dbReference>
<dbReference type="Gene3D" id="3.40.1170.10">
    <property type="entry name" value="DNA repair protein MutS, domain I"/>
    <property type="match status" value="1"/>
</dbReference>
<dbReference type="Gene3D" id="3.30.420.110">
    <property type="entry name" value="MutS, connector domain"/>
    <property type="match status" value="1"/>
</dbReference>
<dbReference type="Gene3D" id="3.40.50.300">
    <property type="entry name" value="P-loop containing nucleotide triphosphate hydrolases"/>
    <property type="match status" value="1"/>
</dbReference>
<dbReference type="HAMAP" id="MF_00096">
    <property type="entry name" value="MutS"/>
    <property type="match status" value="1"/>
</dbReference>
<dbReference type="InterPro" id="IPR005748">
    <property type="entry name" value="DNA_mismatch_repair_MutS"/>
</dbReference>
<dbReference type="InterPro" id="IPR007695">
    <property type="entry name" value="DNA_mismatch_repair_MutS-lik_N"/>
</dbReference>
<dbReference type="InterPro" id="IPR017261">
    <property type="entry name" value="DNA_mismatch_repair_MutS/MSH"/>
</dbReference>
<dbReference type="InterPro" id="IPR000432">
    <property type="entry name" value="DNA_mismatch_repair_MutS_C"/>
</dbReference>
<dbReference type="InterPro" id="IPR007861">
    <property type="entry name" value="DNA_mismatch_repair_MutS_clamp"/>
</dbReference>
<dbReference type="InterPro" id="IPR007696">
    <property type="entry name" value="DNA_mismatch_repair_MutS_core"/>
</dbReference>
<dbReference type="InterPro" id="IPR016151">
    <property type="entry name" value="DNA_mismatch_repair_MutS_N"/>
</dbReference>
<dbReference type="InterPro" id="IPR036187">
    <property type="entry name" value="DNA_mismatch_repair_MutS_sf"/>
</dbReference>
<dbReference type="InterPro" id="IPR007860">
    <property type="entry name" value="DNA_mmatch_repair_MutS_con_dom"/>
</dbReference>
<dbReference type="InterPro" id="IPR045076">
    <property type="entry name" value="MutS"/>
</dbReference>
<dbReference type="InterPro" id="IPR036678">
    <property type="entry name" value="MutS_con_dom_sf"/>
</dbReference>
<dbReference type="InterPro" id="IPR027417">
    <property type="entry name" value="P-loop_NTPase"/>
</dbReference>
<dbReference type="NCBIfam" id="TIGR01070">
    <property type="entry name" value="mutS1"/>
    <property type="match status" value="1"/>
</dbReference>
<dbReference type="NCBIfam" id="NF003810">
    <property type="entry name" value="PRK05399.1"/>
    <property type="match status" value="1"/>
</dbReference>
<dbReference type="PANTHER" id="PTHR11361:SF34">
    <property type="entry name" value="DNA MISMATCH REPAIR PROTEIN MSH1, MITOCHONDRIAL"/>
    <property type="match status" value="1"/>
</dbReference>
<dbReference type="PANTHER" id="PTHR11361">
    <property type="entry name" value="DNA MISMATCH REPAIR PROTEIN MUTS FAMILY MEMBER"/>
    <property type="match status" value="1"/>
</dbReference>
<dbReference type="Pfam" id="PF01624">
    <property type="entry name" value="MutS_I"/>
    <property type="match status" value="1"/>
</dbReference>
<dbReference type="Pfam" id="PF05188">
    <property type="entry name" value="MutS_II"/>
    <property type="match status" value="1"/>
</dbReference>
<dbReference type="Pfam" id="PF05192">
    <property type="entry name" value="MutS_III"/>
    <property type="match status" value="1"/>
</dbReference>
<dbReference type="Pfam" id="PF05190">
    <property type="entry name" value="MutS_IV"/>
    <property type="match status" value="1"/>
</dbReference>
<dbReference type="Pfam" id="PF00488">
    <property type="entry name" value="MutS_V"/>
    <property type="match status" value="1"/>
</dbReference>
<dbReference type="PIRSF" id="PIRSF037677">
    <property type="entry name" value="DNA_mis_repair_Msh6"/>
    <property type="match status" value="1"/>
</dbReference>
<dbReference type="SMART" id="SM00534">
    <property type="entry name" value="MUTSac"/>
    <property type="match status" value="1"/>
</dbReference>
<dbReference type="SMART" id="SM00533">
    <property type="entry name" value="MUTSd"/>
    <property type="match status" value="1"/>
</dbReference>
<dbReference type="SUPFAM" id="SSF55271">
    <property type="entry name" value="DNA repair protein MutS, domain I"/>
    <property type="match status" value="1"/>
</dbReference>
<dbReference type="SUPFAM" id="SSF53150">
    <property type="entry name" value="DNA repair protein MutS, domain II"/>
    <property type="match status" value="1"/>
</dbReference>
<dbReference type="SUPFAM" id="SSF48334">
    <property type="entry name" value="DNA repair protein MutS, domain III"/>
    <property type="match status" value="1"/>
</dbReference>
<dbReference type="SUPFAM" id="SSF52540">
    <property type="entry name" value="P-loop containing nucleoside triphosphate hydrolases"/>
    <property type="match status" value="1"/>
</dbReference>
<dbReference type="PROSITE" id="PS00486">
    <property type="entry name" value="DNA_MISMATCH_REPAIR_2"/>
    <property type="match status" value="1"/>
</dbReference>
<organism>
    <name type="scientific">Paraburkholderia phytofirmans (strain DSM 17436 / LMG 22146 / PsJN)</name>
    <name type="common">Burkholderia phytofirmans</name>
    <dbReference type="NCBI Taxonomy" id="398527"/>
    <lineage>
        <taxon>Bacteria</taxon>
        <taxon>Pseudomonadati</taxon>
        <taxon>Pseudomonadota</taxon>
        <taxon>Betaproteobacteria</taxon>
        <taxon>Burkholderiales</taxon>
        <taxon>Burkholderiaceae</taxon>
        <taxon>Paraburkholderia</taxon>
    </lineage>
</organism>
<feature type="chain" id="PRO_1000093613" description="DNA mismatch repair protein MutS">
    <location>
        <begin position="1"/>
        <end position="894"/>
    </location>
</feature>
<feature type="binding site" evidence="1">
    <location>
        <begin position="632"/>
        <end position="639"/>
    </location>
    <ligand>
        <name>ATP</name>
        <dbReference type="ChEBI" id="CHEBI:30616"/>
    </ligand>
</feature>
<reference key="1">
    <citation type="journal article" date="2011" name="J. Bacteriol.">
        <title>Complete genome sequence of the plant growth-promoting endophyte Burkholderia phytofirmans strain PsJN.</title>
        <authorList>
            <person name="Weilharter A."/>
            <person name="Mitter B."/>
            <person name="Shin M.V."/>
            <person name="Chain P.S."/>
            <person name="Nowak J."/>
            <person name="Sessitsch A."/>
        </authorList>
    </citation>
    <scope>NUCLEOTIDE SEQUENCE [LARGE SCALE GENOMIC DNA]</scope>
    <source>
        <strain>DSM 17436 / LMG 22146 / PsJN</strain>
    </source>
</reference>